<name>FLIW_AZOSB</name>
<gene>
    <name evidence="1" type="primary">fliW</name>
    <name type="ordered locus">azo0475</name>
</gene>
<keyword id="KW-1005">Bacterial flagellum biogenesis</keyword>
<keyword id="KW-0143">Chaperone</keyword>
<keyword id="KW-0963">Cytoplasm</keyword>
<keyword id="KW-1185">Reference proteome</keyword>
<keyword id="KW-0810">Translation regulation</keyword>
<dbReference type="EMBL" id="AM406670">
    <property type="protein sequence ID" value="CAL93092.1"/>
    <property type="molecule type" value="Genomic_DNA"/>
</dbReference>
<dbReference type="RefSeq" id="WP_011764210.1">
    <property type="nucleotide sequence ID" value="NC_008702.1"/>
</dbReference>
<dbReference type="SMR" id="A1K2N7"/>
<dbReference type="STRING" id="62928.azo0475"/>
<dbReference type="KEGG" id="aoa:dqs_0486"/>
<dbReference type="KEGG" id="azo:azo0475"/>
<dbReference type="eggNOG" id="COG1699">
    <property type="taxonomic scope" value="Bacteria"/>
</dbReference>
<dbReference type="HOGENOM" id="CLU_112356_0_1_4"/>
<dbReference type="OrthoDB" id="9801235at2"/>
<dbReference type="Proteomes" id="UP000002588">
    <property type="component" value="Chromosome"/>
</dbReference>
<dbReference type="GO" id="GO:0005737">
    <property type="term" value="C:cytoplasm"/>
    <property type="evidence" value="ECO:0007669"/>
    <property type="project" value="UniProtKB-SubCell"/>
</dbReference>
<dbReference type="GO" id="GO:0044780">
    <property type="term" value="P:bacterial-type flagellum assembly"/>
    <property type="evidence" value="ECO:0007669"/>
    <property type="project" value="UniProtKB-UniRule"/>
</dbReference>
<dbReference type="GO" id="GO:0006417">
    <property type="term" value="P:regulation of translation"/>
    <property type="evidence" value="ECO:0007669"/>
    <property type="project" value="UniProtKB-KW"/>
</dbReference>
<dbReference type="Gene3D" id="2.30.290.10">
    <property type="entry name" value="BH3618-like"/>
    <property type="match status" value="1"/>
</dbReference>
<dbReference type="HAMAP" id="MF_01185">
    <property type="entry name" value="FliW"/>
    <property type="match status" value="1"/>
</dbReference>
<dbReference type="InterPro" id="IPR003775">
    <property type="entry name" value="Flagellar_assembly_factor_FliW"/>
</dbReference>
<dbReference type="InterPro" id="IPR024046">
    <property type="entry name" value="Flagellar_assmbl_FliW_dom_sf"/>
</dbReference>
<dbReference type="NCBIfam" id="NF009792">
    <property type="entry name" value="PRK13284.1"/>
    <property type="match status" value="1"/>
</dbReference>
<dbReference type="PANTHER" id="PTHR39190">
    <property type="entry name" value="FLAGELLAR ASSEMBLY FACTOR FLIW"/>
    <property type="match status" value="1"/>
</dbReference>
<dbReference type="PANTHER" id="PTHR39190:SF1">
    <property type="entry name" value="FLAGELLAR ASSEMBLY FACTOR FLIW"/>
    <property type="match status" value="1"/>
</dbReference>
<dbReference type="Pfam" id="PF02623">
    <property type="entry name" value="FliW"/>
    <property type="match status" value="1"/>
</dbReference>
<dbReference type="SUPFAM" id="SSF141457">
    <property type="entry name" value="BH3618-like"/>
    <property type="match status" value="1"/>
</dbReference>
<accession>A1K2N7</accession>
<organism>
    <name type="scientific">Azoarcus sp. (strain BH72)</name>
    <dbReference type="NCBI Taxonomy" id="418699"/>
    <lineage>
        <taxon>Bacteria</taxon>
        <taxon>Pseudomonadati</taxon>
        <taxon>Pseudomonadota</taxon>
        <taxon>Betaproteobacteria</taxon>
        <taxon>Rhodocyclales</taxon>
        <taxon>Zoogloeaceae</taxon>
        <taxon>Azoarcus</taxon>
    </lineage>
</organism>
<feature type="chain" id="PRO_1000065806" description="Flagellar assembly factor FliW">
    <location>
        <begin position="1"/>
        <end position="146"/>
    </location>
</feature>
<comment type="function">
    <text evidence="1">Acts as an anti-CsrA protein, binds CsrA and prevents it from repressing translation of its target genes, one of which is flagellin. Binds to flagellin and participates in the assembly of the flagellum.</text>
</comment>
<comment type="subunit">
    <text evidence="1">Interacts with translational regulator CsrA and flagellin(s).</text>
</comment>
<comment type="subcellular location">
    <subcellularLocation>
        <location evidence="1">Cytoplasm</location>
    </subcellularLocation>
</comment>
<comment type="similarity">
    <text evidence="1">Belongs to the FliW family.</text>
</comment>
<reference key="1">
    <citation type="journal article" date="2006" name="Nat. Biotechnol.">
        <title>Complete genome of the mutualistic, N2-fixing grass endophyte Azoarcus sp. strain BH72.</title>
        <authorList>
            <person name="Krause A."/>
            <person name="Ramakumar A."/>
            <person name="Bartels D."/>
            <person name="Battistoni F."/>
            <person name="Bekel T."/>
            <person name="Boch J."/>
            <person name="Boehm M."/>
            <person name="Friedrich F."/>
            <person name="Hurek T."/>
            <person name="Krause L."/>
            <person name="Linke B."/>
            <person name="McHardy A.C."/>
            <person name="Sarkar A."/>
            <person name="Schneiker S."/>
            <person name="Syed A.A."/>
            <person name="Thauer R."/>
            <person name="Vorhoelter F.-J."/>
            <person name="Weidner S."/>
            <person name="Puehler A."/>
            <person name="Reinhold-Hurek B."/>
            <person name="Kaiser O."/>
            <person name="Goesmann A."/>
        </authorList>
    </citation>
    <scope>NUCLEOTIDE SEQUENCE [LARGE SCALE GENOMIC DNA]</scope>
    <source>
        <strain>BH72</strain>
    </source>
</reference>
<sequence>MKIESPVFGSAEVSDDKVIEFPAGLPGFEHCKRFVLVHEEGSDTAVFLLQSVDDADVAFSITGPEQLGINYEFALSDEEVATLGLASPAEALVAVIVRKDGEAGSPASTGLRANFMAPLVINVEGRRGLQKVINRLGCDIVLRERA</sequence>
<evidence type="ECO:0000255" key="1">
    <source>
        <dbReference type="HAMAP-Rule" id="MF_01185"/>
    </source>
</evidence>
<proteinExistence type="inferred from homology"/>
<protein>
    <recommendedName>
        <fullName evidence="1">Flagellar assembly factor FliW</fullName>
    </recommendedName>
</protein>